<organism>
    <name type="scientific">Cupriavidus necator (strain ATCC 17699 / DSM 428 / KCTC 22496 / NCIMB 10442 / H16 / Stanier 337)</name>
    <name type="common">Ralstonia eutropha</name>
    <dbReference type="NCBI Taxonomy" id="381666"/>
    <lineage>
        <taxon>Bacteria</taxon>
        <taxon>Pseudomonadati</taxon>
        <taxon>Pseudomonadota</taxon>
        <taxon>Betaproteobacteria</taxon>
        <taxon>Burkholderiales</taxon>
        <taxon>Burkholderiaceae</taxon>
        <taxon>Cupriavidus</taxon>
    </lineage>
</organism>
<protein>
    <recommendedName>
        <fullName evidence="1">Urease accessory protein UreF</fullName>
    </recommendedName>
</protein>
<reference key="1">
    <citation type="submission" date="1997-09" db="EMBL/GenBank/DDBJ databases">
        <title>Ralstonia eutropha H16 urease genes and proteins.</title>
        <authorList>
            <person name="Piettre C."/>
            <person name="Toussaint A."/>
        </authorList>
    </citation>
    <scope>NUCLEOTIDE SEQUENCE [GENOMIC DNA]</scope>
</reference>
<reference key="2">
    <citation type="journal article" date="2006" name="Nat. Biotechnol.">
        <title>Genome sequence of the bioplastic-producing 'Knallgas' bacterium Ralstonia eutropha H16.</title>
        <authorList>
            <person name="Pohlmann A."/>
            <person name="Fricke W.F."/>
            <person name="Reinecke F."/>
            <person name="Kusian B."/>
            <person name="Liesegang H."/>
            <person name="Cramm R."/>
            <person name="Eitinger T."/>
            <person name="Ewering C."/>
            <person name="Poetter M."/>
            <person name="Schwartz E."/>
            <person name="Strittmatter A."/>
            <person name="Voss I."/>
            <person name="Gottschalk G."/>
            <person name="Steinbuechel A."/>
            <person name="Friedrich B."/>
            <person name="Bowien B."/>
        </authorList>
    </citation>
    <scope>NUCLEOTIDE SEQUENCE [LARGE SCALE GENOMIC DNA]</scope>
    <source>
        <strain>ATCC 17699 / DSM 428 / KCTC 22496 / NCIMB 10442 / H16 / Stanier 337</strain>
    </source>
</reference>
<name>UREF_CUPNH</name>
<comment type="function">
    <text evidence="1">Required for maturation of urease via the functional incorporation of the urease nickel metallocenter.</text>
</comment>
<comment type="subunit">
    <text evidence="1">UreD, UreF and UreG form a complex that acts as a GTP-hydrolysis-dependent molecular chaperone, activating the urease apoprotein by helping to assemble the nickel containing metallocenter of UreC. The UreE protein probably delivers the nickel.</text>
</comment>
<comment type="subcellular location">
    <subcellularLocation>
        <location evidence="1">Cytoplasm</location>
    </subcellularLocation>
</comment>
<comment type="similarity">
    <text evidence="1">Belongs to the UreF family.</text>
</comment>
<dbReference type="EMBL" id="Y13732">
    <property type="protein sequence ID" value="CAA74069.1"/>
    <property type="molecule type" value="Genomic_DNA"/>
</dbReference>
<dbReference type="EMBL" id="AM260479">
    <property type="protein sequence ID" value="CAJ92227.1"/>
    <property type="molecule type" value="Genomic_DNA"/>
</dbReference>
<dbReference type="RefSeq" id="WP_011614869.1">
    <property type="nucleotide sequence ID" value="NC_008313.1"/>
</dbReference>
<dbReference type="SMR" id="Q0KCP4"/>
<dbReference type="STRING" id="381666.H16_A1086"/>
<dbReference type="KEGG" id="reh:H16_A1086"/>
<dbReference type="PATRIC" id="fig|381666.6.peg.1470"/>
<dbReference type="eggNOG" id="COG0830">
    <property type="taxonomic scope" value="Bacteria"/>
</dbReference>
<dbReference type="HOGENOM" id="CLU_049215_2_1_4"/>
<dbReference type="OrthoDB" id="9798772at2"/>
<dbReference type="Proteomes" id="UP000008210">
    <property type="component" value="Chromosome 1"/>
</dbReference>
<dbReference type="GO" id="GO:0005737">
    <property type="term" value="C:cytoplasm"/>
    <property type="evidence" value="ECO:0007669"/>
    <property type="project" value="UniProtKB-SubCell"/>
</dbReference>
<dbReference type="GO" id="GO:0016151">
    <property type="term" value="F:nickel cation binding"/>
    <property type="evidence" value="ECO:0007669"/>
    <property type="project" value="UniProtKB-UniRule"/>
</dbReference>
<dbReference type="Gene3D" id="1.10.4190.10">
    <property type="entry name" value="Urease accessory protein UreF"/>
    <property type="match status" value="1"/>
</dbReference>
<dbReference type="HAMAP" id="MF_01385">
    <property type="entry name" value="UreF"/>
    <property type="match status" value="1"/>
</dbReference>
<dbReference type="InterPro" id="IPR002639">
    <property type="entry name" value="UreF"/>
</dbReference>
<dbReference type="InterPro" id="IPR038277">
    <property type="entry name" value="UreF_sf"/>
</dbReference>
<dbReference type="PANTHER" id="PTHR33620">
    <property type="entry name" value="UREASE ACCESSORY PROTEIN F"/>
    <property type="match status" value="1"/>
</dbReference>
<dbReference type="PANTHER" id="PTHR33620:SF1">
    <property type="entry name" value="UREASE ACCESSORY PROTEIN F"/>
    <property type="match status" value="1"/>
</dbReference>
<dbReference type="Pfam" id="PF01730">
    <property type="entry name" value="UreF"/>
    <property type="match status" value="1"/>
</dbReference>
<dbReference type="PIRSF" id="PIRSF009467">
    <property type="entry name" value="Ureas_acces_UreF"/>
    <property type="match status" value="1"/>
</dbReference>
<accession>Q0KCP4</accession>
<accession>O30339</accession>
<proteinExistence type="inferred from homology"/>
<evidence type="ECO:0000255" key="1">
    <source>
        <dbReference type="HAMAP-Rule" id="MF_01385"/>
    </source>
</evidence>
<evidence type="ECO:0000305" key="2"/>
<keyword id="KW-0143">Chaperone</keyword>
<keyword id="KW-0963">Cytoplasm</keyword>
<keyword id="KW-0996">Nickel insertion</keyword>
<keyword id="KW-1185">Reference proteome</keyword>
<gene>
    <name evidence="1" type="primary">ureF</name>
    <name type="ordered locus">H16_A1086</name>
</gene>
<feature type="chain" id="PRO_0000344159" description="Urease accessory protein UreF">
    <location>
        <begin position="1"/>
        <end position="230"/>
    </location>
</feature>
<feature type="sequence conflict" description="In Ref. 2; CAA74069." evidence="2" ref="2">
    <original>E</original>
    <variation>D</variation>
    <location>
        <position position="45"/>
    </location>
</feature>
<sequence length="230" mass="25444">MTQLHQLISLLHLASPSLPIGGFSYSQGLEAAIDCGSVHDAASAERWIRDNLLHVQAQCEAPLWLLLHRCWKAGDAAQVRTWNDWFRATRETSELRLETEQMGWSLSRLIAQMEWGAPVLRETLAALSPVCLPTAFTAACVALQVEARDGLAAYCFNWAENQVAAAIKAVPLGQVAGQHMLRRLHCAVLDTVDEATRRADATPPQLSTFSPMLGLLSARHETQYSRLFRS</sequence>